<reference key="1">
    <citation type="journal article" date="2004" name="Nat. Genet.">
        <title>Comparison of genome degradation in Paratyphi A and Typhi, human-restricted serovars of Salmonella enterica that cause typhoid.</title>
        <authorList>
            <person name="McClelland M."/>
            <person name="Sanderson K.E."/>
            <person name="Clifton S.W."/>
            <person name="Latreille P."/>
            <person name="Porwollik S."/>
            <person name="Sabo A."/>
            <person name="Meyer R."/>
            <person name="Bieri T."/>
            <person name="Ozersky P."/>
            <person name="McLellan M."/>
            <person name="Harkins C.R."/>
            <person name="Wang C."/>
            <person name="Nguyen C."/>
            <person name="Berghoff A."/>
            <person name="Elliott G."/>
            <person name="Kohlberg S."/>
            <person name="Strong C."/>
            <person name="Du F."/>
            <person name="Carter J."/>
            <person name="Kremizki C."/>
            <person name="Layman D."/>
            <person name="Leonard S."/>
            <person name="Sun H."/>
            <person name="Fulton L."/>
            <person name="Nash W."/>
            <person name="Miner T."/>
            <person name="Minx P."/>
            <person name="Delehaunty K."/>
            <person name="Fronick C."/>
            <person name="Magrini V."/>
            <person name="Nhan M."/>
            <person name="Warren W."/>
            <person name="Florea L."/>
            <person name="Spieth J."/>
            <person name="Wilson R.K."/>
        </authorList>
    </citation>
    <scope>NUCLEOTIDE SEQUENCE [LARGE SCALE GENOMIC DNA]</scope>
    <source>
        <strain>ATCC 9150 / SARB42</strain>
    </source>
</reference>
<protein>
    <recommendedName>
        <fullName evidence="1">DNA-directed RNA polymerase subunit alpha</fullName>
        <shortName evidence="1">RNAP subunit alpha</shortName>
        <ecNumber evidence="1">2.7.7.6</ecNumber>
    </recommendedName>
    <alternativeName>
        <fullName evidence="1">RNA polymerase subunit alpha</fullName>
    </alternativeName>
    <alternativeName>
        <fullName evidence="1">Transcriptase subunit alpha</fullName>
    </alternativeName>
</protein>
<sequence>MQGSVTEFLKPRLVDIEQVSSTHAKVTLEPLERGFGHTLGNALRRILLSSMPGCAVTEVEIDGVLHEYSTKEGVQEDILEILLNLKGLAVRVQGKDEVILTLNKSGIGPVTAADITHDGDVEIVKPQHVICHLTDENASISMRIKVQRGRGYVPASTRIHSEEDERPIGRLLVDACYSPVERIAYNVEAARVEQRTDLDKLVIEMETNGTIDPEEAIRRAATILAEQLEAFVDLRDVRQPEVKEEKPEFDPILLRPVDDLELTVRSANCLKAEAIHYIGDLVQRTEVELLKTPNLGKKSLTEIKDVLASRGLSLGMRLENWPPASIADE</sequence>
<name>RPOA_SALPA</name>
<proteinExistence type="inferred from homology"/>
<feature type="chain" id="PRO_0000175371" description="DNA-directed RNA polymerase subunit alpha">
    <location>
        <begin position="1"/>
        <end position="329"/>
    </location>
</feature>
<feature type="region of interest" description="Alpha N-terminal domain (alpha-NTD)" evidence="1">
    <location>
        <begin position="1"/>
        <end position="235"/>
    </location>
</feature>
<feature type="region of interest" description="Alpha C-terminal domain (alpha-CTD)" evidence="1">
    <location>
        <begin position="249"/>
        <end position="329"/>
    </location>
</feature>
<keyword id="KW-0240">DNA-directed RNA polymerase</keyword>
<keyword id="KW-0548">Nucleotidyltransferase</keyword>
<keyword id="KW-0804">Transcription</keyword>
<keyword id="KW-0808">Transferase</keyword>
<accession>Q5PK10</accession>
<dbReference type="EC" id="2.7.7.6" evidence="1"/>
<dbReference type="EMBL" id="CP000026">
    <property type="protein sequence ID" value="AAV79097.1"/>
    <property type="molecule type" value="Genomic_DNA"/>
</dbReference>
<dbReference type="RefSeq" id="WP_001162094.1">
    <property type="nucleotide sequence ID" value="NC_006511.1"/>
</dbReference>
<dbReference type="SMR" id="Q5PK10"/>
<dbReference type="GeneID" id="93778692"/>
<dbReference type="KEGG" id="spt:SPA3281"/>
<dbReference type="HOGENOM" id="CLU_053084_0_0_6"/>
<dbReference type="Proteomes" id="UP000008185">
    <property type="component" value="Chromosome"/>
</dbReference>
<dbReference type="GO" id="GO:0005737">
    <property type="term" value="C:cytoplasm"/>
    <property type="evidence" value="ECO:0007669"/>
    <property type="project" value="UniProtKB-ARBA"/>
</dbReference>
<dbReference type="GO" id="GO:0000428">
    <property type="term" value="C:DNA-directed RNA polymerase complex"/>
    <property type="evidence" value="ECO:0007669"/>
    <property type="project" value="UniProtKB-KW"/>
</dbReference>
<dbReference type="GO" id="GO:0003677">
    <property type="term" value="F:DNA binding"/>
    <property type="evidence" value="ECO:0007669"/>
    <property type="project" value="UniProtKB-UniRule"/>
</dbReference>
<dbReference type="GO" id="GO:0003899">
    <property type="term" value="F:DNA-directed RNA polymerase activity"/>
    <property type="evidence" value="ECO:0007669"/>
    <property type="project" value="UniProtKB-UniRule"/>
</dbReference>
<dbReference type="GO" id="GO:0046983">
    <property type="term" value="F:protein dimerization activity"/>
    <property type="evidence" value="ECO:0007669"/>
    <property type="project" value="InterPro"/>
</dbReference>
<dbReference type="GO" id="GO:0006351">
    <property type="term" value="P:DNA-templated transcription"/>
    <property type="evidence" value="ECO:0007669"/>
    <property type="project" value="UniProtKB-UniRule"/>
</dbReference>
<dbReference type="CDD" id="cd06928">
    <property type="entry name" value="RNAP_alpha_NTD"/>
    <property type="match status" value="1"/>
</dbReference>
<dbReference type="FunFam" id="1.10.150.20:FF:000001">
    <property type="entry name" value="DNA-directed RNA polymerase subunit alpha"/>
    <property type="match status" value="1"/>
</dbReference>
<dbReference type="FunFam" id="2.170.120.12:FF:000001">
    <property type="entry name" value="DNA-directed RNA polymerase subunit alpha"/>
    <property type="match status" value="1"/>
</dbReference>
<dbReference type="Gene3D" id="1.10.150.20">
    <property type="entry name" value="5' to 3' exonuclease, C-terminal subdomain"/>
    <property type="match status" value="1"/>
</dbReference>
<dbReference type="Gene3D" id="2.170.120.12">
    <property type="entry name" value="DNA-directed RNA polymerase, insert domain"/>
    <property type="match status" value="1"/>
</dbReference>
<dbReference type="Gene3D" id="3.30.1360.10">
    <property type="entry name" value="RNA polymerase, RBP11-like subunit"/>
    <property type="match status" value="1"/>
</dbReference>
<dbReference type="HAMAP" id="MF_00059">
    <property type="entry name" value="RNApol_bact_RpoA"/>
    <property type="match status" value="1"/>
</dbReference>
<dbReference type="InterPro" id="IPR011262">
    <property type="entry name" value="DNA-dir_RNA_pol_insert"/>
</dbReference>
<dbReference type="InterPro" id="IPR011263">
    <property type="entry name" value="DNA-dir_RNA_pol_RpoA/D/Rpb3"/>
</dbReference>
<dbReference type="InterPro" id="IPR011773">
    <property type="entry name" value="DNA-dir_RpoA"/>
</dbReference>
<dbReference type="InterPro" id="IPR036603">
    <property type="entry name" value="RBP11-like"/>
</dbReference>
<dbReference type="InterPro" id="IPR011260">
    <property type="entry name" value="RNAP_asu_C"/>
</dbReference>
<dbReference type="InterPro" id="IPR036643">
    <property type="entry name" value="RNApol_insert_sf"/>
</dbReference>
<dbReference type="NCBIfam" id="NF003513">
    <property type="entry name" value="PRK05182.1-2"/>
    <property type="match status" value="1"/>
</dbReference>
<dbReference type="NCBIfam" id="NF003519">
    <property type="entry name" value="PRK05182.2-5"/>
    <property type="match status" value="1"/>
</dbReference>
<dbReference type="NCBIfam" id="TIGR02027">
    <property type="entry name" value="rpoA"/>
    <property type="match status" value="1"/>
</dbReference>
<dbReference type="Pfam" id="PF01000">
    <property type="entry name" value="RNA_pol_A_bac"/>
    <property type="match status" value="1"/>
</dbReference>
<dbReference type="Pfam" id="PF03118">
    <property type="entry name" value="RNA_pol_A_CTD"/>
    <property type="match status" value="1"/>
</dbReference>
<dbReference type="Pfam" id="PF01193">
    <property type="entry name" value="RNA_pol_L"/>
    <property type="match status" value="1"/>
</dbReference>
<dbReference type="SMART" id="SM00662">
    <property type="entry name" value="RPOLD"/>
    <property type="match status" value="1"/>
</dbReference>
<dbReference type="SUPFAM" id="SSF47789">
    <property type="entry name" value="C-terminal domain of RNA polymerase alpha subunit"/>
    <property type="match status" value="1"/>
</dbReference>
<dbReference type="SUPFAM" id="SSF56553">
    <property type="entry name" value="Insert subdomain of RNA polymerase alpha subunit"/>
    <property type="match status" value="1"/>
</dbReference>
<dbReference type="SUPFAM" id="SSF55257">
    <property type="entry name" value="RBP11-like subunits of RNA polymerase"/>
    <property type="match status" value="1"/>
</dbReference>
<evidence type="ECO:0000255" key="1">
    <source>
        <dbReference type="HAMAP-Rule" id="MF_00059"/>
    </source>
</evidence>
<organism>
    <name type="scientific">Salmonella paratyphi A (strain ATCC 9150 / SARB42)</name>
    <dbReference type="NCBI Taxonomy" id="295319"/>
    <lineage>
        <taxon>Bacteria</taxon>
        <taxon>Pseudomonadati</taxon>
        <taxon>Pseudomonadota</taxon>
        <taxon>Gammaproteobacteria</taxon>
        <taxon>Enterobacterales</taxon>
        <taxon>Enterobacteriaceae</taxon>
        <taxon>Salmonella</taxon>
    </lineage>
</organism>
<gene>
    <name evidence="1" type="primary">rpoA</name>
    <name type="ordered locus">SPA3281</name>
</gene>
<comment type="function">
    <text evidence="1">DNA-dependent RNA polymerase catalyzes the transcription of DNA into RNA using the four ribonucleoside triphosphates as substrates.</text>
</comment>
<comment type="catalytic activity">
    <reaction evidence="1">
        <text>RNA(n) + a ribonucleoside 5'-triphosphate = RNA(n+1) + diphosphate</text>
        <dbReference type="Rhea" id="RHEA:21248"/>
        <dbReference type="Rhea" id="RHEA-COMP:14527"/>
        <dbReference type="Rhea" id="RHEA-COMP:17342"/>
        <dbReference type="ChEBI" id="CHEBI:33019"/>
        <dbReference type="ChEBI" id="CHEBI:61557"/>
        <dbReference type="ChEBI" id="CHEBI:140395"/>
        <dbReference type="EC" id="2.7.7.6"/>
    </reaction>
</comment>
<comment type="subunit">
    <text evidence="1">Homodimer. The RNAP catalytic core consists of 2 alpha, 1 beta, 1 beta' and 1 omega subunit. When a sigma factor is associated with the core the holoenzyme is formed, which can initiate transcription.</text>
</comment>
<comment type="domain">
    <text evidence="1">The N-terminal domain is essential for RNAP assembly and basal transcription, whereas the C-terminal domain is involved in interaction with transcriptional regulators and with upstream promoter elements.</text>
</comment>
<comment type="similarity">
    <text evidence="1">Belongs to the RNA polymerase alpha chain family.</text>
</comment>